<organism>
    <name type="scientific">Homo sapiens</name>
    <name type="common">Human</name>
    <dbReference type="NCBI Taxonomy" id="9606"/>
    <lineage>
        <taxon>Eukaryota</taxon>
        <taxon>Metazoa</taxon>
        <taxon>Chordata</taxon>
        <taxon>Craniata</taxon>
        <taxon>Vertebrata</taxon>
        <taxon>Euteleostomi</taxon>
        <taxon>Mammalia</taxon>
        <taxon>Eutheria</taxon>
        <taxon>Euarchontoglires</taxon>
        <taxon>Primates</taxon>
        <taxon>Haplorrhini</taxon>
        <taxon>Catarrhini</taxon>
        <taxon>Hominidae</taxon>
        <taxon>Homo</taxon>
    </lineage>
</organism>
<protein>
    <recommendedName>
        <fullName evidence="15 18">Signal peptide peptidase-like 2B</fullName>
        <shortName evidence="15">SPP-like 2B</shortName>
        <shortName evidence="15">SPPL2b</shortName>
        <ecNumber>3.4.23.-</ecNumber>
    </recommendedName>
    <alternativeName>
        <fullName evidence="14">Intramembrane protease 4</fullName>
        <shortName evidence="14">IMP-4</shortName>
    </alternativeName>
    <alternativeName>
        <fullName>Presenilin homologous protein 4</fullName>
        <shortName>PSH4</shortName>
    </alternativeName>
    <alternativeName>
        <fullName>Presenilin-like protein 1</fullName>
    </alternativeName>
</protein>
<comment type="function">
    <text evidence="7 8 10 11 12 13">Intramembrane-cleaving aspartic protease (I-CLiP) that cleaves type II membrane signal peptides in the hydrophobic plane of the membrane. Functions in ITM2B and TNF processing (PubMed:16829951, PubMed:16829952, PubMed:17965014, PubMed:19114711, PubMed:22194595). Catalyzes the intramembrane cleavage of the anchored fragment of shed TNF-alpha (TNF), which promotes the release of the intracellular domain (ICD) for signaling to the nucleus (PubMed:16829951, PubMed:16829952). May play a role in the regulation of innate and adaptive immunity (PubMed:16829952). Catalyzes the intramembrane cleavage of the simian foamy virus processed leader peptide gp18 of the envelope glycoprotein gp130 dependently of prior ectodomain shedding by furin or furin-like proprotein convertase (PC)-mediated cleavage proteolysis (PubMed:23132852).</text>
</comment>
<comment type="subunit">
    <text evidence="6 7 9 10 13">Monomer (PubMed:15998642, PubMed:16873890). Homodimer (PubMed:15998642, PubMed:16873890). Interacts with ITM2B (PubMed:17965014). Interacts with TNF (PubMed:16829951). Interacts with the simian foamy virus envelope glycoprotein gp130 and its processed leader peptide gp18LP; preferentially interacts with the leader peptide gp18LP (PubMed:23132852).</text>
</comment>
<comment type="interaction">
    <interactant intactId="EBI-8345366">
        <id>Q8TCT7-2</id>
    </interactant>
    <interactant intactId="EBI-2837444">
        <id>Q8WUW1</id>
        <label>BRK1</label>
    </interactant>
    <organismsDiffer>false</organismsDiffer>
    <experiments>3</experiments>
</comment>
<comment type="interaction">
    <interactant intactId="EBI-8345366">
        <id>Q8TCT7-2</id>
    </interactant>
    <interactant intactId="EBI-750300">
        <id>Q01658</id>
        <label>DR1</label>
    </interactant>
    <organismsDiffer>false</organismsDiffer>
    <experiments>3</experiments>
</comment>
<comment type="interaction">
    <interactant intactId="EBI-8345366">
        <id>Q8TCT7-2</id>
    </interactant>
    <interactant intactId="EBI-5280572">
        <id>P29692-2</id>
        <label>EEF1D</label>
    </interactant>
    <organismsDiffer>false</organismsDiffer>
    <experiments>3</experiments>
</comment>
<comment type="interaction">
    <interactant intactId="EBI-8345366">
        <id>Q8TCT7-2</id>
    </interactant>
    <interactant intactId="EBI-25856644">
        <id>Q06787-7</id>
        <label>FMR1</label>
    </interactant>
    <organismsDiffer>false</organismsDiffer>
    <experiments>3</experiments>
</comment>
<comment type="interaction">
    <interactant intactId="EBI-8345366">
        <id>Q8TCT7-2</id>
    </interactant>
    <interactant intactId="EBI-389564">
        <id>Q00403</id>
        <label>GTF2B</label>
    </interactant>
    <organismsDiffer>false</organismsDiffer>
    <experiments>3</experiments>
</comment>
<comment type="interaction">
    <interactant intactId="EBI-8345366">
        <id>Q8TCT7-2</id>
    </interactant>
    <interactant intactId="EBI-1054873">
        <id>Q9Y5Q9</id>
        <label>GTF3C3</label>
    </interactant>
    <organismsDiffer>false</organismsDiffer>
    <experiments>3</experiments>
</comment>
<comment type="interaction">
    <interactant intactId="EBI-8345366">
        <id>Q8TCT7-2</id>
    </interactant>
    <interactant intactId="EBI-352682">
        <id>P04792</id>
        <label>HSPB1</label>
    </interactant>
    <organismsDiffer>false</organismsDiffer>
    <experiments>3</experiments>
</comment>
<comment type="interaction">
    <interactant intactId="EBI-8345366">
        <id>Q8TCT7-2</id>
    </interactant>
    <interactant intactId="EBI-10975473">
        <id>O60333-2</id>
        <label>KIF1B</label>
    </interactant>
    <organismsDiffer>false</organismsDiffer>
    <experiments>3</experiments>
</comment>
<comment type="interaction">
    <interactant intactId="EBI-8345366">
        <id>Q8TCT7-2</id>
    </interactant>
    <interactant intactId="EBI-21251460">
        <id>O60260-5</id>
        <label>PRKN</label>
    </interactant>
    <organismsDiffer>false</organismsDiffer>
    <experiments>3</experiments>
</comment>
<comment type="interaction">
    <interactant intactId="EBI-8345366">
        <id>Q8TCT7-2</id>
    </interactant>
    <interactant intactId="EBI-749195">
        <id>P60891</id>
        <label>PRPS1</label>
    </interactant>
    <organismsDiffer>false</organismsDiffer>
    <experiments>3</experiments>
</comment>
<comment type="interaction">
    <interactant intactId="EBI-8345366">
        <id>Q8TCT7-2</id>
    </interactant>
    <interactant intactId="EBI-396669">
        <id>Q9Y3C5</id>
        <label>RNF11</label>
    </interactant>
    <organismsDiffer>false</organismsDiffer>
    <experiments>3</experiments>
</comment>
<comment type="interaction">
    <interactant intactId="EBI-8345366">
        <id>Q8TCT7-2</id>
    </interactant>
    <interactant intactId="EBI-985879">
        <id>P37840</id>
        <label>SNCA</label>
    </interactant>
    <organismsDiffer>false</organismsDiffer>
    <experiments>3</experiments>
</comment>
<comment type="subcellular location">
    <subcellularLocation>
        <location evidence="8">Cell membrane</location>
        <topology evidence="17">Multi-pass membrane protein</topology>
    </subcellularLocation>
    <subcellularLocation>
        <location evidence="10">Golgi apparatus membrane</location>
        <topology evidence="17">Multi-pass membrane protein</topology>
    </subcellularLocation>
    <subcellularLocation>
        <location evidence="6">Lysosome membrane</location>
        <topology evidence="17">Multi-pass membrane protein</topology>
    </subcellularLocation>
    <subcellularLocation>
        <location evidence="6">Endosome membrane</location>
        <topology evidence="17">Multi-pass membrane protein</topology>
    </subcellularLocation>
    <subcellularLocation>
        <location evidence="5">Membrane</location>
        <topology evidence="17">Multi-pass membrane protein</topology>
        <orientation evidence="5">Lumenal side</orientation>
    </subcellularLocation>
    <text evidence="6">targeted through the entire secretory pathway to endosomes/lysosomes (PubMed:15998642).</text>
</comment>
<comment type="alternative products">
    <event type="alternative splicing"/>
    <isoform>
        <id>Q8TCT7-1</id>
        <name>1</name>
        <sequence type="displayed"/>
    </isoform>
    <isoform>
        <id>Q8TCT7-2</id>
        <name>2</name>
        <sequence type="described" ref="VSP_005204"/>
    </isoform>
    <isoform>
        <id>Q8TCT7-4</id>
        <name>4</name>
        <sequence type="described" ref="VSP_009221 VSP_009222"/>
    </isoform>
    <text>Experimental confirmation may be lacking for some isoforms.</text>
</comment>
<comment type="tissue specificity">
    <text evidence="5">Expressed predominantly in adrenal cortex and mammary gland.</text>
</comment>
<comment type="domain">
    <text evidence="1">The PAL motif is required for normal active site conformation. The catalytic domains embedded in the membrane are in the opposite orientation to that of the presenilin protein family; therefore, it is predicted to cleave type II-oriented substrate peptides like the prototypic protease SPP.</text>
</comment>
<comment type="PTM">
    <text evidence="5 6">Glycosylated (PubMed:15385547, PubMed:15998642).</text>
</comment>
<comment type="similarity">
    <text evidence="17">Belongs to the peptidase A22B family.</text>
</comment>
<comment type="sequence caution" evidence="17">
    <conflict type="erroneous gene model prediction">
        <sequence resource="EMBL-CDS" id="AAC05601"/>
    </conflict>
</comment>
<comment type="sequence caution" evidence="17">
    <conflict type="erroneous initiation">
        <sequence resource="EMBL-CDS" id="AAG45441"/>
    </conflict>
    <text>Extended N-terminus.</text>
</comment>
<comment type="sequence caution" evidence="17">
    <conflict type="erroneous initiation">
        <sequence resource="EMBL-CDS" id="BAA96056"/>
    </conflict>
    <text>Extended N-terminus.</text>
</comment>
<comment type="sequence caution" evidence="17">
    <conflict type="erroneous translation">
        <sequence resource="EMBL-CDS" id="CAB96951"/>
    </conflict>
    <text>Wrong choice of frame.</text>
</comment>
<comment type="sequence caution" evidence="17">
    <conflict type="miscellaneous discrepancy">
        <sequence resource="EMBL-CDS" id="CAB96951"/>
    </conflict>
    <text>Probable cloning artifact.</text>
</comment>
<name>SPP2B_HUMAN</name>
<proteinExistence type="evidence at protein level"/>
<evidence type="ECO:0000250" key="1">
    <source>
        <dbReference type="UniProtKB" id="P49768"/>
    </source>
</evidence>
<evidence type="ECO:0000250" key="2">
    <source>
        <dbReference type="UniProtKB" id="P49810"/>
    </source>
</evidence>
<evidence type="ECO:0000255" key="3"/>
<evidence type="ECO:0000256" key="4">
    <source>
        <dbReference type="SAM" id="MobiDB-lite"/>
    </source>
</evidence>
<evidence type="ECO:0000269" key="5">
    <source>
    </source>
</evidence>
<evidence type="ECO:0000269" key="6">
    <source>
    </source>
</evidence>
<evidence type="ECO:0000269" key="7">
    <source>
    </source>
</evidence>
<evidence type="ECO:0000269" key="8">
    <source>
    </source>
</evidence>
<evidence type="ECO:0000269" key="9">
    <source>
    </source>
</evidence>
<evidence type="ECO:0000269" key="10">
    <source>
    </source>
</evidence>
<evidence type="ECO:0000269" key="11">
    <source>
    </source>
</evidence>
<evidence type="ECO:0000269" key="12">
    <source>
    </source>
</evidence>
<evidence type="ECO:0000269" key="13">
    <source>
    </source>
</evidence>
<evidence type="ECO:0000303" key="14">
    <source>
    </source>
</evidence>
<evidence type="ECO:0000303" key="15">
    <source>
    </source>
</evidence>
<evidence type="ECO:0000303" key="16">
    <source>
    </source>
</evidence>
<evidence type="ECO:0000305" key="17"/>
<evidence type="ECO:0000312" key="18">
    <source>
        <dbReference type="HGNC" id="HGNC:30627"/>
    </source>
</evidence>
<sequence>MAAAVAAALARLLAAFLLLAAQVACEYGMVHVVSQAGGPEGKDYCILYNPQWAHLPHDLSKASFLQLRNWTASLLCSAADLPARGFSNQIPLVARGNCTFYEKVRLAQGSGARGLLIVSRERLVPPGGNKTQYDEIGIPVALLSYKDMLDIFTRFGRTVRAALYAPKEPVLDYNMVIIFIMAVGTVAIGGYWAGSRDVKKRYMKHKRDDGPEKQEDEAVDVTPVMTCVFVVMCCSMLVLLYYFYDLLVYVVIGIFCLASATGLYSCLAPCVRRLPFGKCRIPNNSLPYFHKRPQARMLLLALFCVAVSVVWGVFRNEDQWAWVLQDALGIAFCLYMLKTIRLPTFKACTLLLLVLFLYDIFFVFITPFLTKSGSSIMVEVATGPSDSATREKLPMVLKVPRLNSSPLALCDRPFSLLGFGDILVPGLLVAYCHRFDIQVQSSRVYFVACTIAYGVGLLVTFVALALMQRGQPALLYLVPCTLVTSCAVALWRRELGVFWTGSGFAKVLPPSPWAPAPADGPQPPKDSATPLSPQPPSEEPATSPWPAEQSPKSRTSEEMGAGAPMREPGSPAESEGRDQAQPSPVTQPGASA</sequence>
<keyword id="KW-0025">Alternative splicing</keyword>
<keyword id="KW-1003">Cell membrane</keyword>
<keyword id="KW-0967">Endosome</keyword>
<keyword id="KW-0325">Glycoprotein</keyword>
<keyword id="KW-0333">Golgi apparatus</keyword>
<keyword id="KW-0378">Hydrolase</keyword>
<keyword id="KW-0458">Lysosome</keyword>
<keyword id="KW-0472">Membrane</keyword>
<keyword id="KW-0645">Protease</keyword>
<keyword id="KW-1267">Proteomics identification</keyword>
<keyword id="KW-1185">Reference proteome</keyword>
<keyword id="KW-0732">Signal</keyword>
<keyword id="KW-0812">Transmembrane</keyword>
<keyword id="KW-1133">Transmembrane helix</keyword>
<feature type="signal peptide" evidence="5">
    <location>
        <begin position="1"/>
        <end position="25"/>
    </location>
</feature>
<feature type="chain" id="PRO_0000073909" description="Signal peptide peptidase-like 2B">
    <location>
        <begin position="26"/>
        <end position="592"/>
    </location>
</feature>
<feature type="topological domain" description="Lumenal" evidence="5">
    <location>
        <begin position="26"/>
        <end position="174"/>
    </location>
</feature>
<feature type="transmembrane region" description="Helical" evidence="3">
    <location>
        <begin position="175"/>
        <end position="195"/>
    </location>
</feature>
<feature type="topological domain" description="Cytoplasmic" evidence="3">
    <location>
        <begin position="196"/>
        <end position="221"/>
    </location>
</feature>
<feature type="transmembrane region" description="Helical" evidence="3">
    <location>
        <begin position="222"/>
        <end position="244"/>
    </location>
</feature>
<feature type="topological domain" description="Lumenal" evidence="3">
    <location>
        <begin position="245"/>
        <end position="248"/>
    </location>
</feature>
<feature type="transmembrane region" description="Helical" evidence="3">
    <location>
        <begin position="249"/>
        <end position="271"/>
    </location>
</feature>
<feature type="topological domain" description="Cytoplasmic" evidence="3">
    <location>
        <begin position="272"/>
        <end position="293"/>
    </location>
</feature>
<feature type="transmembrane region" description="Helical" evidence="3">
    <location>
        <begin position="294"/>
        <end position="314"/>
    </location>
</feature>
<feature type="topological domain" description="Lumenal" evidence="3">
    <location>
        <begin position="315"/>
        <end position="319"/>
    </location>
</feature>
<feature type="transmembrane region" description="Helical" evidence="3">
    <location>
        <begin position="320"/>
        <end position="340"/>
    </location>
</feature>
<feature type="topological domain" description="Cytoplasmic" evidence="3">
    <location>
        <begin position="341"/>
        <end position="348"/>
    </location>
</feature>
<feature type="transmembrane region" description="Helical" evidence="3">
    <location>
        <begin position="349"/>
        <end position="369"/>
    </location>
</feature>
<feature type="topological domain" description="Lumenal" evidence="5">
    <location>
        <begin position="370"/>
        <end position="412"/>
    </location>
</feature>
<feature type="transmembrane region" description="Helical" evidence="3">
    <location>
        <begin position="413"/>
        <end position="433"/>
    </location>
</feature>
<feature type="topological domain" description="Cytoplasmic" evidence="3">
    <location>
        <begin position="434"/>
        <end position="445"/>
    </location>
</feature>
<feature type="transmembrane region" description="Helical" evidence="3">
    <location>
        <begin position="446"/>
        <end position="466"/>
    </location>
</feature>
<feature type="topological domain" description="Lumenal" evidence="3">
    <location>
        <begin position="467"/>
        <end position="470"/>
    </location>
</feature>
<feature type="transmembrane region" description="Helical" evidence="3">
    <location>
        <begin position="471"/>
        <end position="491"/>
    </location>
</feature>
<feature type="topological domain" description="Cytoplasmic" evidence="5">
    <location>
        <begin position="492"/>
        <end position="592"/>
    </location>
</feature>
<feature type="domain" description="PA">
    <location>
        <begin position="71"/>
        <end position="149"/>
    </location>
</feature>
<feature type="region of interest" description="Disordered" evidence="4">
    <location>
        <begin position="512"/>
        <end position="592"/>
    </location>
</feature>
<feature type="short sequence motif" description="PAL">
    <location>
        <begin position="472"/>
        <end position="474"/>
    </location>
</feature>
<feature type="compositionally biased region" description="Pro residues" evidence="4">
    <location>
        <begin position="512"/>
        <end position="524"/>
    </location>
</feature>
<feature type="compositionally biased region" description="Polar residues" evidence="4">
    <location>
        <begin position="580"/>
        <end position="592"/>
    </location>
</feature>
<feature type="active site" evidence="2">
    <location>
        <position position="359"/>
    </location>
</feature>
<feature type="active site" evidence="2">
    <location>
        <position position="421"/>
    </location>
</feature>
<feature type="glycosylation site" description="N-linked (GlcNAc...) asparagine" evidence="3">
    <location>
        <position position="97"/>
    </location>
</feature>
<feature type="glycosylation site" description="N-linked (GlcNAc...) asparagine" evidence="3">
    <location>
        <position position="129"/>
    </location>
</feature>
<feature type="splice variant" id="VSP_005204" description="In isoform 2." evidence="16">
    <location>
        <begin position="320"/>
        <end position="592"/>
    </location>
</feature>
<feature type="splice variant" id="VSP_009221" description="In isoform 4." evidence="16">
    <original>KVLPPS</original>
    <variation>VNTSLL</variation>
    <location>
        <begin position="506"/>
        <end position="511"/>
    </location>
</feature>
<feature type="splice variant" id="VSP_009222" description="In isoform 4." evidence="16">
    <location>
        <begin position="512"/>
        <end position="592"/>
    </location>
</feature>
<feature type="sequence variant" id="VAR_059780" description="In dbSNP:rs10402284.">
    <original>S</original>
    <variation>P</variation>
    <location>
        <position position="574"/>
    </location>
</feature>
<feature type="mutagenesis site" description="Loss of intramembrane-cleaving activity toward ITM2B, TNF and the simian foamy virus envelope glycoprotein gp130." evidence="7 10 11 12">
    <original>D</original>
    <variation>A</variation>
    <location>
        <position position="421"/>
    </location>
</feature>
<accession>Q8TCT7</accession>
<accession>D6W609</accession>
<accession>O60365</accession>
<accession>Q567S3</accession>
<accession>Q8IUH9</accession>
<accession>Q9BUY6</accession>
<accession>Q9H3M4</accession>
<accession>Q9NPN2</accession>
<accession>Q9P1Z6</accession>
<reference key="1">
    <citation type="submission" date="2001-09" db="EMBL/GenBank/DDBJ databases">
        <title>Characterization of a new protein family with homology to presenilins.</title>
        <authorList>
            <person name="Irmler M."/>
            <person name="Tomiuk S."/>
            <person name="Korner M.R."/>
            <person name="Hofmann K."/>
            <person name="Conradt M."/>
        </authorList>
    </citation>
    <scope>NUCLEOTIDE SEQUENCE [MRNA] (ISOFORM 1)</scope>
</reference>
<reference key="2">
    <citation type="submission" date="2001-11" db="EMBL/GenBank/DDBJ databases">
        <authorList>
            <person name="Martoglio B."/>
        </authorList>
    </citation>
    <scope>NUCLEOTIDE SEQUENCE [MRNA] (ISOFORM 1)</scope>
</reference>
<reference key="3">
    <citation type="journal article" date="2002" name="Biochemistry (Mosc.)">
        <title>Novel class of polytopic proteins with domains associated with putative protease activity.</title>
        <authorList>
            <person name="Grigorenko A.P."/>
            <person name="Moliaka Y.K."/>
            <person name="Korovaitseva G.I."/>
            <person name="Rogaev E.I."/>
        </authorList>
    </citation>
    <scope>NUCLEOTIDE SEQUENCE [MRNA] (ISOFORM 1)</scope>
    <source>
        <tissue>Blood</tissue>
    </source>
</reference>
<reference key="4">
    <citation type="journal article" date="2000" name="DNA Res.">
        <title>Prediction of the coding sequences of unidentified human genes. XVII. The complete sequences of 100 new cDNA clones from brain which code for large proteins in vitro.</title>
        <authorList>
            <person name="Nagase T."/>
            <person name="Kikuno R."/>
            <person name="Ishikawa K."/>
            <person name="Hirosawa M."/>
            <person name="Ohara O."/>
        </authorList>
    </citation>
    <scope>NUCLEOTIDE SEQUENCE [LARGE SCALE MRNA] (ISOFORM 1)</scope>
    <source>
        <tissue>Brain</tissue>
    </source>
</reference>
<reference key="5">
    <citation type="journal article" date="2004" name="Nature">
        <title>The DNA sequence and biology of human chromosome 19.</title>
        <authorList>
            <person name="Grimwood J."/>
            <person name="Gordon L.A."/>
            <person name="Olsen A.S."/>
            <person name="Terry A."/>
            <person name="Schmutz J."/>
            <person name="Lamerdin J.E."/>
            <person name="Hellsten U."/>
            <person name="Goodstein D."/>
            <person name="Couronne O."/>
            <person name="Tran-Gyamfi M."/>
            <person name="Aerts A."/>
            <person name="Altherr M."/>
            <person name="Ashworth L."/>
            <person name="Bajorek E."/>
            <person name="Black S."/>
            <person name="Branscomb E."/>
            <person name="Caenepeel S."/>
            <person name="Carrano A.V."/>
            <person name="Caoile C."/>
            <person name="Chan Y.M."/>
            <person name="Christensen M."/>
            <person name="Cleland C.A."/>
            <person name="Copeland A."/>
            <person name="Dalin E."/>
            <person name="Dehal P."/>
            <person name="Denys M."/>
            <person name="Detter J.C."/>
            <person name="Escobar J."/>
            <person name="Flowers D."/>
            <person name="Fotopulos D."/>
            <person name="Garcia C."/>
            <person name="Georgescu A.M."/>
            <person name="Glavina T."/>
            <person name="Gomez M."/>
            <person name="Gonzales E."/>
            <person name="Groza M."/>
            <person name="Hammon N."/>
            <person name="Hawkins T."/>
            <person name="Haydu L."/>
            <person name="Ho I."/>
            <person name="Huang W."/>
            <person name="Israni S."/>
            <person name="Jett J."/>
            <person name="Kadner K."/>
            <person name="Kimball H."/>
            <person name="Kobayashi A."/>
            <person name="Larionov V."/>
            <person name="Leem S.-H."/>
            <person name="Lopez F."/>
            <person name="Lou Y."/>
            <person name="Lowry S."/>
            <person name="Malfatti S."/>
            <person name="Martinez D."/>
            <person name="McCready P.M."/>
            <person name="Medina C."/>
            <person name="Morgan J."/>
            <person name="Nelson K."/>
            <person name="Nolan M."/>
            <person name="Ovcharenko I."/>
            <person name="Pitluck S."/>
            <person name="Pollard M."/>
            <person name="Popkie A.P."/>
            <person name="Predki P."/>
            <person name="Quan G."/>
            <person name="Ramirez L."/>
            <person name="Rash S."/>
            <person name="Retterer J."/>
            <person name="Rodriguez A."/>
            <person name="Rogers S."/>
            <person name="Salamov A."/>
            <person name="Salazar A."/>
            <person name="She X."/>
            <person name="Smith D."/>
            <person name="Slezak T."/>
            <person name="Solovyev V."/>
            <person name="Thayer N."/>
            <person name="Tice H."/>
            <person name="Tsai M."/>
            <person name="Ustaszewska A."/>
            <person name="Vo N."/>
            <person name="Wagner M."/>
            <person name="Wheeler J."/>
            <person name="Wu K."/>
            <person name="Xie G."/>
            <person name="Yang J."/>
            <person name="Dubchak I."/>
            <person name="Furey T.S."/>
            <person name="DeJong P."/>
            <person name="Dickson M."/>
            <person name="Gordon D."/>
            <person name="Eichler E.E."/>
            <person name="Pennacchio L.A."/>
            <person name="Richardson P."/>
            <person name="Stubbs L."/>
            <person name="Rokhsar D.S."/>
            <person name="Myers R.M."/>
            <person name="Rubin E.M."/>
            <person name="Lucas S.M."/>
        </authorList>
    </citation>
    <scope>NUCLEOTIDE SEQUENCE [LARGE SCALE GENOMIC DNA]</scope>
</reference>
<reference key="6">
    <citation type="submission" date="2005-09" db="EMBL/GenBank/DDBJ databases">
        <authorList>
            <person name="Mural R.J."/>
            <person name="Istrail S."/>
            <person name="Sutton G.G."/>
            <person name="Florea L."/>
            <person name="Halpern A.L."/>
            <person name="Mobarry C.M."/>
            <person name="Lippert R."/>
            <person name="Walenz B."/>
            <person name="Shatkay H."/>
            <person name="Dew I."/>
            <person name="Miller J.R."/>
            <person name="Flanigan M.J."/>
            <person name="Edwards N.J."/>
            <person name="Bolanos R."/>
            <person name="Fasulo D."/>
            <person name="Halldorsson B.V."/>
            <person name="Hannenhalli S."/>
            <person name="Turner R."/>
            <person name="Yooseph S."/>
            <person name="Lu F."/>
            <person name="Nusskern D.R."/>
            <person name="Shue B.C."/>
            <person name="Zheng X.H."/>
            <person name="Zhong F."/>
            <person name="Delcher A.L."/>
            <person name="Huson D.H."/>
            <person name="Kravitz S.A."/>
            <person name="Mouchard L."/>
            <person name="Reinert K."/>
            <person name="Remington K.A."/>
            <person name="Clark A.G."/>
            <person name="Waterman M.S."/>
            <person name="Eichler E.E."/>
            <person name="Adams M.D."/>
            <person name="Hunkapiller M.W."/>
            <person name="Myers E.W."/>
            <person name="Venter J.C."/>
        </authorList>
    </citation>
    <scope>NUCLEOTIDE SEQUENCE [LARGE SCALE GENOMIC DNA]</scope>
</reference>
<reference key="7">
    <citation type="journal article" date="2004" name="Genome Res.">
        <title>The status, quality, and expansion of the NIH full-length cDNA project: the Mammalian Gene Collection (MGC).</title>
        <authorList>
            <consortium name="The MGC Project Team"/>
        </authorList>
    </citation>
    <scope>NUCLEOTIDE SEQUENCE [LARGE SCALE MRNA] (ISOFORMS 1; 2 AND 4)</scope>
    <source>
        <tissue>Brain</tissue>
        <tissue>Eye</tissue>
        <tissue>Testis</tissue>
    </source>
</reference>
<reference key="8">
    <citation type="submission" date="2000-07" db="EMBL/GenBank/DDBJ databases">
        <authorList>
            <consortium name="The European IMAGE consortium"/>
        </authorList>
    </citation>
    <scope>NUCLEOTIDE SEQUENCE [LARGE SCALE MRNA] OF 201-279 (ISOFORM 1)</scope>
</reference>
<reference key="9">
    <citation type="journal article" date="2004" name="J. Biol. Chem.">
        <title>Consensus analysis of signal peptide peptidase and homologous human aspartic proteases reveals opposite topology of catalytic domains compared with presenilins.</title>
        <authorList>
            <person name="Friedmann E."/>
            <person name="Lemberg M.K."/>
            <person name="Weihofen A."/>
            <person name="Dev K.K."/>
            <person name="Dengler U."/>
            <person name="Rovelli G."/>
            <person name="Martoglio B."/>
        </authorList>
    </citation>
    <scope>GLYCOSYLATION</scope>
    <scope>TOPOLOGY</scope>
    <scope>SUBCELLULAR LOCATION</scope>
    <scope>TISSUE SPECIFICITY</scope>
</reference>
<reference key="10">
    <citation type="journal article" date="2005" name="J. Biol. Chem.">
        <title>Differential localization and identification of a critical aspartate suggest non-redundant proteolytic functions of the presenilin homologues SPPL2b and SPPL3.</title>
        <authorList>
            <person name="Krawitz P."/>
            <person name="Haffner C."/>
            <person name="Fluhrer R."/>
            <person name="Steiner H."/>
            <person name="Schmid B."/>
            <person name="Haass C."/>
        </authorList>
    </citation>
    <scope>SUBUNIT</scope>
    <scope>GLYCOSYLATION</scope>
    <scope>SUBCELLULAR LOCATION</scope>
</reference>
<reference key="11">
    <citation type="journal article" date="2006" name="FASEB J.">
        <title>Intramembrane proteolytic cleavage by human signal peptide peptidase like 3 and malaria signal peptide peptidase.</title>
        <authorList>
            <person name="Nyborg A.C."/>
            <person name="Ladd T.B."/>
            <person name="Jansen K."/>
            <person name="Kukar T."/>
            <person name="Golde T.E."/>
        </authorList>
    </citation>
    <scope>SUBUNIT</scope>
</reference>
<reference key="12">
    <citation type="journal article" date="2006" name="Nat. Cell Biol.">
        <title>SPPL2a and SPPL2b promote intramembrane proteolysis of TNFalpha in activated dendritic cells to trigger IL-12 production.</title>
        <authorList>
            <person name="Friedmann E."/>
            <person name="Hauben E."/>
            <person name="Maylandt K."/>
            <person name="Schleeger S."/>
            <person name="Vreugde S."/>
            <person name="Lichtenthaler S.F."/>
            <person name="Kuhn P.H."/>
            <person name="Stauffer D."/>
            <person name="Rovelli G."/>
            <person name="Martoglio B."/>
        </authorList>
    </citation>
    <scope>FUNCTION IN CLEAVAGE OF TNF</scope>
    <scope>SUBCELLULAR LOCATION</scope>
</reference>
<reference key="13">
    <citation type="journal article" date="2006" name="Nat. Cell Biol.">
        <title>A gamma-secretase-like intramembrane cleavage of TNFalpha by the GxGD aspartyl protease SPPL2b.</title>
        <authorList>
            <person name="Fluhrer R."/>
            <person name="Grammer G."/>
            <person name="Israel L."/>
            <person name="Condron M.M."/>
            <person name="Haffner C."/>
            <person name="Friedmann E."/>
            <person name="Bohland C."/>
            <person name="Imhof A."/>
            <person name="Martoglio B."/>
            <person name="Teplow D.B."/>
            <person name="Haass C."/>
        </authorList>
    </citation>
    <scope>FUNCTION IN CLEAVAGE OF TNF</scope>
    <scope>INTERACTION WITH TNF</scope>
    <scope>MUTAGENESIS OF ASP-421</scope>
</reference>
<reference key="14">
    <citation type="journal article" date="2008" name="J. Biol. Chem.">
        <title>Regulated intramembrane proteolysis of Bri2 (Itm2b) by ADAM10 and SPPL2a/SPPL2b.</title>
        <authorList>
            <person name="Martin L."/>
            <person name="Fluhrer R."/>
            <person name="Reiss K."/>
            <person name="Kremmer E."/>
            <person name="Saftig P."/>
            <person name="Haass C."/>
        </authorList>
    </citation>
    <scope>FUNCTION IN CLEAVAGE OF ITM2B</scope>
    <scope>SUBCELLULAR LOCATION</scope>
    <scope>INTERACTION WITH ITM2B</scope>
    <scope>MUTAGENESIS OF ASP-421</scope>
</reference>
<reference key="15">
    <citation type="journal article" date="2009" name="J. Biol. Chem.">
        <title>Substrate requirements for SPPL2b-dependent regulated intramembrane proteolysis.</title>
        <authorList>
            <person name="Martin L."/>
            <person name="Fluhrer R."/>
            <person name="Haass C."/>
        </authorList>
    </citation>
    <scope>FUNCTION IN CLEAVAGE OF ITM2B</scope>
    <scope>MUTAGENESIS OF ASP-421</scope>
</reference>
<reference key="16">
    <citation type="journal article" date="2012" name="J. Biol. Chem.">
        <title>The alpha-helical content of the transmembrane domain of the British dementia protein-2 (Bri2) determines its processing by signal peptide peptidase-like 2b (SPPL2b).</title>
        <authorList>
            <person name="Fluhrer R."/>
            <person name="Martin L."/>
            <person name="Klier B."/>
            <person name="Haug-Kroper M."/>
            <person name="Grammer G."/>
            <person name="Nuscher B."/>
            <person name="Haass C."/>
        </authorList>
    </citation>
    <scope>FUNCTION IN CLEAVAGE OF ITM2B</scope>
    <scope>MUTAGENESIS OF ASP-421</scope>
</reference>
<reference key="17">
    <citation type="journal article" date="2012" name="J. Biol. Chem.">
        <title>Foamy virus envelope protein is a substrate for signal peptide peptidase-like 3 (SPPL3).</title>
        <authorList>
            <person name="Voss M."/>
            <person name="Fukumori A."/>
            <person name="Kuhn P.H."/>
            <person name="Kunzel U."/>
            <person name="Klier B."/>
            <person name="Grammer G."/>
            <person name="Haug-Kroper M."/>
            <person name="Kremmer E."/>
            <person name="Lichtenthaler S.F."/>
            <person name="Steiner H."/>
            <person name="Schroder B."/>
            <person name="Haass C."/>
            <person name="Fluhrer R."/>
        </authorList>
    </citation>
    <scope>FUNCTION</scope>
    <scope>INTERACTION WITH SIMIAN FOAMY VIRUS ENVELOPE GLYCOPROTEIN GP130</scope>
    <scope>MUTAGENESIS OF ASP-421</scope>
</reference>
<dbReference type="EC" id="3.4.23.-"/>
<dbReference type="EMBL" id="AJ345027">
    <property type="protein sequence ID" value="CAC87788.1"/>
    <property type="molecule type" value="mRNA"/>
</dbReference>
<dbReference type="EMBL" id="AJ420897">
    <property type="protein sequence ID" value="CAD13134.1"/>
    <property type="molecule type" value="mRNA"/>
</dbReference>
<dbReference type="EMBL" id="AY169315">
    <property type="protein sequence ID" value="AAO12540.1"/>
    <property type="molecule type" value="mRNA"/>
</dbReference>
<dbReference type="EMBL" id="AB040965">
    <property type="protein sequence ID" value="BAA96056.1"/>
    <property type="status" value="ALT_INIT"/>
    <property type="molecule type" value="mRNA"/>
</dbReference>
<dbReference type="EMBL" id="AC004410">
    <property type="protein sequence ID" value="AAC05601.1"/>
    <property type="status" value="ALT_SEQ"/>
    <property type="molecule type" value="Genomic_DNA"/>
</dbReference>
<dbReference type="EMBL" id="AC005258">
    <property type="protein sequence ID" value="AAG45441.1"/>
    <property type="status" value="ALT_INIT"/>
    <property type="molecule type" value="Genomic_DNA"/>
</dbReference>
<dbReference type="EMBL" id="CH471139">
    <property type="protein sequence ID" value="EAW69383.1"/>
    <property type="molecule type" value="Genomic_DNA"/>
</dbReference>
<dbReference type="EMBL" id="CH471139">
    <property type="protein sequence ID" value="EAW69388.1"/>
    <property type="molecule type" value="Genomic_DNA"/>
</dbReference>
<dbReference type="EMBL" id="BC001788">
    <property type="protein sequence ID" value="AAH01788.2"/>
    <property type="molecule type" value="mRNA"/>
</dbReference>
<dbReference type="EMBL" id="BC028391">
    <property type="protein sequence ID" value="AAH28391.2"/>
    <property type="molecule type" value="mRNA"/>
</dbReference>
<dbReference type="EMBL" id="BC093046">
    <property type="protein sequence ID" value="AAH93046.1"/>
    <property type="molecule type" value="mRNA"/>
</dbReference>
<dbReference type="EMBL" id="AL365405">
    <property type="protein sequence ID" value="CAB96951.1"/>
    <property type="status" value="ALT_SEQ"/>
    <property type="molecule type" value="mRNA"/>
</dbReference>
<dbReference type="CCDS" id="CCDS74252.1">
    <molecule id="Q8TCT7-1"/>
</dbReference>
<dbReference type="CCDS" id="CCDS74253.1">
    <molecule id="Q8TCT7-4"/>
</dbReference>
<dbReference type="RefSeq" id="NP_001070706.1">
    <molecule id="Q8TCT7-4"/>
    <property type="nucleotide sequence ID" value="NM_001077238.2"/>
</dbReference>
<dbReference type="RefSeq" id="NP_694533.1">
    <molecule id="Q8TCT7-1"/>
    <property type="nucleotide sequence ID" value="NM_152988.3"/>
</dbReference>
<dbReference type="BioGRID" id="121255">
    <property type="interactions" value="248"/>
</dbReference>
<dbReference type="FunCoup" id="Q8TCT7">
    <property type="interactions" value="1123"/>
</dbReference>
<dbReference type="IntAct" id="Q8TCT7">
    <property type="interactions" value="241"/>
</dbReference>
<dbReference type="MINT" id="Q8TCT7"/>
<dbReference type="STRING" id="9606.ENSP00000478298"/>
<dbReference type="BindingDB" id="Q8TCT7"/>
<dbReference type="ChEMBL" id="CHEMBL4105912"/>
<dbReference type="MEROPS" id="A22.004"/>
<dbReference type="GlyCosmos" id="Q8TCT7">
    <property type="glycosylation" value="2 sites, No reported glycans"/>
</dbReference>
<dbReference type="GlyGen" id="Q8TCT7">
    <property type="glycosylation" value="8 sites, 6 N-linked glycans (5 sites), 1 O-linked glycan (3 sites)"/>
</dbReference>
<dbReference type="iPTMnet" id="Q8TCT7"/>
<dbReference type="PhosphoSitePlus" id="Q8TCT7"/>
<dbReference type="SwissPalm" id="Q8TCT7"/>
<dbReference type="BioMuta" id="SPPL2B"/>
<dbReference type="DMDM" id="97537015"/>
<dbReference type="jPOST" id="Q8TCT7"/>
<dbReference type="MassIVE" id="Q8TCT7"/>
<dbReference type="PaxDb" id="9606-ENSP00000478298"/>
<dbReference type="PeptideAtlas" id="Q8TCT7"/>
<dbReference type="ProteomicsDB" id="74160">
    <molecule id="Q8TCT7-1"/>
</dbReference>
<dbReference type="ProteomicsDB" id="74161">
    <molecule id="Q8TCT7-2"/>
</dbReference>
<dbReference type="ProteomicsDB" id="74163">
    <molecule id="Q8TCT7-4"/>
</dbReference>
<dbReference type="TopDownProteomics" id="Q8TCT7-4">
    <molecule id="Q8TCT7-4"/>
</dbReference>
<dbReference type="Antibodypedia" id="3352">
    <property type="antibodies" value="61 antibodies from 14 providers"/>
</dbReference>
<dbReference type="DNASU" id="56928"/>
<dbReference type="Ensembl" id="ENST00000610743.4">
    <molecule id="Q8TCT7-4"/>
    <property type="protein sequence ID" value="ENSP00000478510.1"/>
    <property type="gene ID" value="ENSG00000005206.17"/>
</dbReference>
<dbReference type="Ensembl" id="ENST00000613503.5">
    <molecule id="Q8TCT7-1"/>
    <property type="protein sequence ID" value="ENSP00000478298.1"/>
    <property type="gene ID" value="ENSG00000005206.17"/>
</dbReference>
<dbReference type="Ensembl" id="ENST00000618220.4">
    <molecule id="Q8TCT7-2"/>
    <property type="protein sequence ID" value="ENSP00000480813.1"/>
    <property type="gene ID" value="ENSG00000005206.17"/>
</dbReference>
<dbReference type="GeneID" id="56928"/>
<dbReference type="KEGG" id="hsa:56928"/>
<dbReference type="MANE-Select" id="ENST00000613503.5">
    <property type="protein sequence ID" value="ENSP00000478298.1"/>
    <property type="RefSeq nucleotide sequence ID" value="NM_152988.3"/>
    <property type="RefSeq protein sequence ID" value="NP_694533.1"/>
</dbReference>
<dbReference type="UCSC" id="uc032hjm.2">
    <molecule id="Q8TCT7-1"/>
    <property type="organism name" value="human"/>
</dbReference>
<dbReference type="AGR" id="HGNC:30627"/>
<dbReference type="CTD" id="56928"/>
<dbReference type="DisGeNET" id="56928"/>
<dbReference type="GeneCards" id="SPPL2B"/>
<dbReference type="HGNC" id="HGNC:30627">
    <property type="gene designation" value="SPPL2B"/>
</dbReference>
<dbReference type="HPA" id="ENSG00000005206">
    <property type="expression patterns" value="Low tissue specificity"/>
</dbReference>
<dbReference type="MIM" id="608239">
    <property type="type" value="gene"/>
</dbReference>
<dbReference type="neXtProt" id="NX_Q8TCT7"/>
<dbReference type="OpenTargets" id="ENSG00000005206"/>
<dbReference type="VEuPathDB" id="HostDB:ENSG00000005206"/>
<dbReference type="eggNOG" id="KOG2442">
    <property type="taxonomic scope" value="Eukaryota"/>
</dbReference>
<dbReference type="GeneTree" id="ENSGT00940000158753"/>
<dbReference type="HOGENOM" id="CLU_023799_2_1_1"/>
<dbReference type="InParanoid" id="Q8TCT7"/>
<dbReference type="OMA" id="CNNPYLM"/>
<dbReference type="OrthoDB" id="29661at2759"/>
<dbReference type="PAN-GO" id="Q8TCT7">
    <property type="GO annotations" value="6 GO annotations based on evolutionary models"/>
</dbReference>
<dbReference type="PhylomeDB" id="Q8TCT7"/>
<dbReference type="PathwayCommons" id="Q8TCT7"/>
<dbReference type="Reactome" id="R-HSA-5357905">
    <property type="pathway name" value="Regulation of TNFR1 signaling"/>
</dbReference>
<dbReference type="SignaLink" id="Q8TCT7"/>
<dbReference type="BioGRID-ORCS" id="56928">
    <property type="hits" value="12 hits in 254 CRISPR screens"/>
</dbReference>
<dbReference type="ChiTaRS" id="SPPL2B">
    <property type="organism name" value="human"/>
</dbReference>
<dbReference type="GeneWiki" id="SPPL2B"/>
<dbReference type="GenomeRNAi" id="56928"/>
<dbReference type="Pharos" id="Q8TCT7">
    <property type="development level" value="Tchem"/>
</dbReference>
<dbReference type="PRO" id="PR:Q8TCT7"/>
<dbReference type="Proteomes" id="UP000005640">
    <property type="component" value="Chromosome 19"/>
</dbReference>
<dbReference type="RNAct" id="Q8TCT7">
    <property type="molecule type" value="protein"/>
</dbReference>
<dbReference type="Bgee" id="ENSG00000005206">
    <property type="expression patterns" value="Expressed in right uterine tube and 147 other cell types or tissues"/>
</dbReference>
<dbReference type="ExpressionAtlas" id="Q8TCT7">
    <property type="expression patterns" value="baseline and differential"/>
</dbReference>
<dbReference type="GO" id="GO:0015629">
    <property type="term" value="C:actin cytoskeleton"/>
    <property type="evidence" value="ECO:0000314"/>
    <property type="project" value="HPA"/>
</dbReference>
<dbReference type="GO" id="GO:0005813">
    <property type="term" value="C:centrosome"/>
    <property type="evidence" value="ECO:0000314"/>
    <property type="project" value="HPA"/>
</dbReference>
<dbReference type="GO" id="GO:0098554">
    <property type="term" value="C:cytoplasmic side of endoplasmic reticulum membrane"/>
    <property type="evidence" value="ECO:0000314"/>
    <property type="project" value="UniProtKB"/>
</dbReference>
<dbReference type="GO" id="GO:0010008">
    <property type="term" value="C:endosome membrane"/>
    <property type="evidence" value="ECO:0000314"/>
    <property type="project" value="UniProtKB"/>
</dbReference>
<dbReference type="GO" id="GO:0000139">
    <property type="term" value="C:Golgi membrane"/>
    <property type="evidence" value="ECO:0007669"/>
    <property type="project" value="UniProtKB-SubCell"/>
</dbReference>
<dbReference type="GO" id="GO:0030660">
    <property type="term" value="C:Golgi-associated vesicle membrane"/>
    <property type="evidence" value="ECO:0000314"/>
    <property type="project" value="UniProtKB"/>
</dbReference>
<dbReference type="GO" id="GO:0098553">
    <property type="term" value="C:lumenal side of endoplasmic reticulum membrane"/>
    <property type="evidence" value="ECO:0000314"/>
    <property type="project" value="UniProtKB"/>
</dbReference>
<dbReference type="GO" id="GO:0005765">
    <property type="term" value="C:lysosomal membrane"/>
    <property type="evidence" value="ECO:0000314"/>
    <property type="project" value="UniProtKB"/>
</dbReference>
<dbReference type="GO" id="GO:0016020">
    <property type="term" value="C:membrane"/>
    <property type="evidence" value="ECO:0000314"/>
    <property type="project" value="UniProtKB"/>
</dbReference>
<dbReference type="GO" id="GO:0005654">
    <property type="term" value="C:nucleoplasm"/>
    <property type="evidence" value="ECO:0000314"/>
    <property type="project" value="HPA"/>
</dbReference>
<dbReference type="GO" id="GO:0005886">
    <property type="term" value="C:plasma membrane"/>
    <property type="evidence" value="ECO:0000314"/>
    <property type="project" value="HPA"/>
</dbReference>
<dbReference type="GO" id="GO:0042500">
    <property type="term" value="F:aspartic endopeptidase activity, intramembrane cleaving"/>
    <property type="evidence" value="ECO:0000314"/>
    <property type="project" value="UniProtKB"/>
</dbReference>
<dbReference type="GO" id="GO:0042803">
    <property type="term" value="F:protein homodimerization activity"/>
    <property type="evidence" value="ECO:0000314"/>
    <property type="project" value="UniProtKB"/>
</dbReference>
<dbReference type="GO" id="GO:0006509">
    <property type="term" value="P:membrane protein ectodomain proteolysis"/>
    <property type="evidence" value="ECO:0000314"/>
    <property type="project" value="UniProtKB"/>
</dbReference>
<dbReference type="GO" id="GO:0031293">
    <property type="term" value="P:membrane protein intracellular domain proteolysis"/>
    <property type="evidence" value="ECO:0000314"/>
    <property type="project" value="UniProtKB"/>
</dbReference>
<dbReference type="GO" id="GO:0033619">
    <property type="term" value="P:membrane protein proteolysis"/>
    <property type="evidence" value="ECO:0000314"/>
    <property type="project" value="UniProtKB"/>
</dbReference>
<dbReference type="GO" id="GO:0050776">
    <property type="term" value="P:regulation of immune response"/>
    <property type="evidence" value="ECO:0000315"/>
    <property type="project" value="UniProtKB"/>
</dbReference>
<dbReference type="GO" id="GO:0010803">
    <property type="term" value="P:regulation of tumor necrosis factor-mediated signaling pathway"/>
    <property type="evidence" value="ECO:0000304"/>
    <property type="project" value="Reactome"/>
</dbReference>
<dbReference type="CDD" id="cd02129">
    <property type="entry name" value="PA_hSPPL_like"/>
    <property type="match status" value="1"/>
</dbReference>
<dbReference type="FunFam" id="3.50.30.30:FF:000006">
    <property type="entry name" value="Putative signal peptide peptidase-like 2B"/>
    <property type="match status" value="1"/>
</dbReference>
<dbReference type="Gene3D" id="3.50.30.30">
    <property type="match status" value="1"/>
</dbReference>
<dbReference type="InterPro" id="IPR046450">
    <property type="entry name" value="PA_dom_sf"/>
</dbReference>
<dbReference type="InterPro" id="IPR003137">
    <property type="entry name" value="PA_domain"/>
</dbReference>
<dbReference type="InterPro" id="IPR007369">
    <property type="entry name" value="Peptidase_A22B_SPP"/>
</dbReference>
<dbReference type="InterPro" id="IPR006639">
    <property type="entry name" value="Preselin/SPP"/>
</dbReference>
<dbReference type="PANTHER" id="PTHR12174">
    <property type="entry name" value="SIGNAL PEPTIDE PEPTIDASE"/>
    <property type="match status" value="1"/>
</dbReference>
<dbReference type="PANTHER" id="PTHR12174:SF39">
    <property type="entry name" value="SIGNAL PEPTIDE PEPTIDASE-LIKE 2B"/>
    <property type="match status" value="1"/>
</dbReference>
<dbReference type="Pfam" id="PF02225">
    <property type="entry name" value="PA"/>
    <property type="match status" value="1"/>
</dbReference>
<dbReference type="Pfam" id="PF04258">
    <property type="entry name" value="Peptidase_A22B"/>
    <property type="match status" value="1"/>
</dbReference>
<dbReference type="SMART" id="SM00730">
    <property type="entry name" value="PSN"/>
    <property type="match status" value="1"/>
</dbReference>
<dbReference type="SUPFAM" id="SSF52025">
    <property type="entry name" value="PA domain"/>
    <property type="match status" value="1"/>
</dbReference>
<gene>
    <name evidence="15 18" type="primary">SPPL2B</name>
    <name evidence="14" type="synonym">IMP4</name>
    <name type="synonym">KIAA1532</name>
    <name type="synonym">PSL1</name>
</gene>